<accession>F4J0A8</accession>
<accession>Q84W84</accession>
<accession>Q9LSI5</accession>
<proteinExistence type="evidence at transcript level"/>
<protein>
    <recommendedName>
        <fullName evidence="8">Probable prolyl 4-hydroxylase 6</fullName>
        <shortName evidence="7">AtP4H6</shortName>
        <ecNumber evidence="8">1.14.11.2</ecNumber>
    </recommendedName>
</protein>
<comment type="function">
    <text evidence="2">Catalyzes the post-translational formation of 4-hydroxyproline in -Xaa-Pro-Gly- sequences in proline-rich peptide sequences of plant glycoproteins and other proteins. Hydroxyprolines are important constituent of many plant cell wall glycoproteins such as extensins, hydroxyproline-rich glycoproteins, lectins and arabinogalactan proteins.</text>
</comment>
<comment type="catalytic activity">
    <reaction evidence="2">
        <text>L-prolyl-[collagen] + 2-oxoglutarate + O2 = trans-4-hydroxy-L-prolyl-[collagen] + succinate + CO2</text>
        <dbReference type="Rhea" id="RHEA:18945"/>
        <dbReference type="Rhea" id="RHEA-COMP:11676"/>
        <dbReference type="Rhea" id="RHEA-COMP:11680"/>
        <dbReference type="ChEBI" id="CHEBI:15379"/>
        <dbReference type="ChEBI" id="CHEBI:16526"/>
        <dbReference type="ChEBI" id="CHEBI:16810"/>
        <dbReference type="ChEBI" id="CHEBI:30031"/>
        <dbReference type="ChEBI" id="CHEBI:50342"/>
        <dbReference type="ChEBI" id="CHEBI:61965"/>
        <dbReference type="EC" id="1.14.11.2"/>
    </reaction>
</comment>
<comment type="cofactor">
    <cofactor evidence="6">
        <name>Fe(2+)</name>
        <dbReference type="ChEBI" id="CHEBI:29033"/>
    </cofactor>
    <text evidence="6">Binds 1 Fe(2+) ion per subunit.</text>
</comment>
<comment type="cofactor">
    <cofactor evidence="3">
        <name>L-ascorbate</name>
        <dbReference type="ChEBI" id="CHEBI:38290"/>
    </cofactor>
</comment>
<comment type="subcellular location">
    <subcellularLocation>
        <location evidence="2">Endoplasmic reticulum membrane</location>
        <topology evidence="2">Single-pass type II membrane protein</topology>
    </subcellularLocation>
</comment>
<comment type="similarity">
    <text evidence="8">Belongs to the P4HA family.</text>
</comment>
<comment type="sequence caution" evidence="8">
    <conflict type="erroneous gene model prediction">
        <sequence resource="EMBL-CDS" id="BAB02865"/>
    </conflict>
</comment>
<name>P4H6_ARATH</name>
<gene>
    <name evidence="7" type="primary">P4H6</name>
    <name type="ordered locus">At3g28490</name>
    <name type="ORF">MFJ20.18</name>
</gene>
<keyword id="KW-0223">Dioxygenase</keyword>
<keyword id="KW-1015">Disulfide bond</keyword>
<keyword id="KW-0256">Endoplasmic reticulum</keyword>
<keyword id="KW-0325">Glycoprotein</keyword>
<keyword id="KW-0408">Iron</keyword>
<keyword id="KW-0472">Membrane</keyword>
<keyword id="KW-0479">Metal-binding</keyword>
<keyword id="KW-0560">Oxidoreductase</keyword>
<keyword id="KW-1185">Reference proteome</keyword>
<keyword id="KW-0735">Signal-anchor</keyword>
<keyword id="KW-0812">Transmembrane</keyword>
<keyword id="KW-1133">Transmembrane helix</keyword>
<reference key="1">
    <citation type="journal article" date="2000" name="DNA Res.">
        <title>Structural analysis of Arabidopsis thaliana chromosome 3. I. Sequence features of the regions of 4,504,864 bp covered by sixty P1 and TAC clones.</title>
        <authorList>
            <person name="Sato S."/>
            <person name="Nakamura Y."/>
            <person name="Kaneko T."/>
            <person name="Katoh T."/>
            <person name="Asamizu E."/>
            <person name="Tabata S."/>
        </authorList>
    </citation>
    <scope>NUCLEOTIDE SEQUENCE [LARGE SCALE GENOMIC DNA]</scope>
    <source>
        <strain>cv. Columbia</strain>
    </source>
</reference>
<reference key="2">
    <citation type="journal article" date="2017" name="Plant J.">
        <title>Araport11: a complete reannotation of the Arabidopsis thaliana reference genome.</title>
        <authorList>
            <person name="Cheng C.Y."/>
            <person name="Krishnakumar V."/>
            <person name="Chan A.P."/>
            <person name="Thibaud-Nissen F."/>
            <person name="Schobel S."/>
            <person name="Town C.D."/>
        </authorList>
    </citation>
    <scope>GENOME REANNOTATION</scope>
    <source>
        <strain>cv. Columbia</strain>
    </source>
</reference>
<reference key="3">
    <citation type="journal article" date="2003" name="Science">
        <title>Empirical analysis of transcriptional activity in the Arabidopsis genome.</title>
        <authorList>
            <person name="Yamada K."/>
            <person name="Lim J."/>
            <person name="Dale J.M."/>
            <person name="Chen H."/>
            <person name="Shinn P."/>
            <person name="Palm C.J."/>
            <person name="Southwick A.M."/>
            <person name="Wu H.C."/>
            <person name="Kim C.J."/>
            <person name="Nguyen M."/>
            <person name="Pham P.K."/>
            <person name="Cheuk R.F."/>
            <person name="Karlin-Newmann G."/>
            <person name="Liu S.X."/>
            <person name="Lam B."/>
            <person name="Sakano H."/>
            <person name="Wu T."/>
            <person name="Yu G."/>
            <person name="Miranda M."/>
            <person name="Quach H.L."/>
            <person name="Tripp M."/>
            <person name="Chang C.H."/>
            <person name="Lee J.M."/>
            <person name="Toriumi M.J."/>
            <person name="Chan M.M."/>
            <person name="Tang C.C."/>
            <person name="Onodera C.S."/>
            <person name="Deng J.M."/>
            <person name="Akiyama K."/>
            <person name="Ansari Y."/>
            <person name="Arakawa T."/>
            <person name="Banh J."/>
            <person name="Banno F."/>
            <person name="Bowser L."/>
            <person name="Brooks S.Y."/>
            <person name="Carninci P."/>
            <person name="Chao Q."/>
            <person name="Choy N."/>
            <person name="Enju A."/>
            <person name="Goldsmith A.D."/>
            <person name="Gurjal M."/>
            <person name="Hansen N.F."/>
            <person name="Hayashizaki Y."/>
            <person name="Johnson-Hopson C."/>
            <person name="Hsuan V.W."/>
            <person name="Iida K."/>
            <person name="Karnes M."/>
            <person name="Khan S."/>
            <person name="Koesema E."/>
            <person name="Ishida J."/>
            <person name="Jiang P.X."/>
            <person name="Jones T."/>
            <person name="Kawai J."/>
            <person name="Kamiya A."/>
            <person name="Meyers C."/>
            <person name="Nakajima M."/>
            <person name="Narusaka M."/>
            <person name="Seki M."/>
            <person name="Sakurai T."/>
            <person name="Satou M."/>
            <person name="Tamse R."/>
            <person name="Vaysberg M."/>
            <person name="Wallender E.K."/>
            <person name="Wong C."/>
            <person name="Yamamura Y."/>
            <person name="Yuan S."/>
            <person name="Shinozaki K."/>
            <person name="Davis R.W."/>
            <person name="Theologis A."/>
            <person name="Ecker J.R."/>
        </authorList>
    </citation>
    <scope>NUCLEOTIDE SEQUENCE [LARGE SCALE MRNA] OF 36-288</scope>
    <source>
        <strain>cv. Columbia</strain>
    </source>
</reference>
<reference key="4">
    <citation type="journal article" date="2007" name="Physiol. Plantarum">
        <title>Arabidopsis prolyl 4-hydroxylases are differentially expressed in response to hypoxia, anoxia and mechanical wounding.</title>
        <authorList>
            <person name="Vlad F."/>
            <person name="Spano T."/>
            <person name="Vlad D."/>
            <person name="Bou Daher F."/>
            <person name="Ouelhadj A."/>
            <person name="Kalaitzis P."/>
        </authorList>
    </citation>
    <scope>GENE FAMILY</scope>
    <scope>NOMENCLATURE</scope>
</reference>
<sequence length="288" mass="32448">MDSQYFLAFSLSLLLIFSQISSFSFSVDPTRITQLSWTPRAFLYKGFLSDEECDHLIKLAKGKLEKSMVVADVDSGESEDSEVRTSSGMFLTKRQDDIVANVEAKLAAWTFLPEENGEALQILHYENGQKYDPHFDYFYDKKALELGGHRIATVLMYLSNVTKGGETVFPNWKGKTPQLKDDSWSKCAKQGYAVKPRKGDALLFFNLHLNGTTDPNSLHGSCPVIEGEKWSATRWIHVRSFGKKKLVCVDDHESCQEWADAGECEKNPMYMVGSETSLGFCRKSCKAC</sequence>
<feature type="chain" id="PRO_0000429340" description="Probable prolyl 4-hydroxylase 6">
    <location>
        <begin position="1"/>
        <end position="288"/>
    </location>
</feature>
<feature type="topological domain" description="Cytoplasmic" evidence="8">
    <location>
        <begin position="1"/>
        <end position="4"/>
    </location>
</feature>
<feature type="transmembrane region" description="Helical; Signal-anchor for type II membrane protein" evidence="4">
    <location>
        <begin position="5"/>
        <end position="27"/>
    </location>
</feature>
<feature type="topological domain" description="Lumenal" evidence="8">
    <location>
        <begin position="28"/>
        <end position="288"/>
    </location>
</feature>
<feature type="domain" description="Fe2OG dioxygenase" evidence="6">
    <location>
        <begin position="116"/>
        <end position="238"/>
    </location>
</feature>
<feature type="domain" description="ShKT">
    <location>
        <begin position="248"/>
        <end position="288"/>
    </location>
</feature>
<feature type="binding site" evidence="6">
    <location>
        <position position="134"/>
    </location>
    <ligand>
        <name>Fe cation</name>
        <dbReference type="ChEBI" id="CHEBI:24875"/>
    </ligand>
</feature>
<feature type="binding site" evidence="6">
    <location>
        <position position="136"/>
    </location>
    <ligand>
        <name>Fe cation</name>
        <dbReference type="ChEBI" id="CHEBI:24875"/>
    </ligand>
</feature>
<feature type="binding site" evidence="6">
    <location>
        <position position="219"/>
    </location>
    <ligand>
        <name>Fe cation</name>
        <dbReference type="ChEBI" id="CHEBI:24875"/>
    </ligand>
</feature>
<feature type="binding site" evidence="6">
    <location>
        <position position="229"/>
    </location>
    <ligand>
        <name>2-oxoglutarate</name>
        <dbReference type="ChEBI" id="CHEBI:16810"/>
    </ligand>
</feature>
<feature type="glycosylation site" description="N-linked (GlcNAc...) asparagine" evidence="5">
    <location>
        <position position="160"/>
    </location>
</feature>
<feature type="glycosylation site" description="N-linked (GlcNAc...) asparagine" evidence="5">
    <location>
        <position position="210"/>
    </location>
</feature>
<feature type="disulfide bond" evidence="1">
    <location>
        <begin position="248"/>
        <end position="288"/>
    </location>
</feature>
<feature type="disulfide bond" evidence="1">
    <location>
        <begin position="255"/>
        <end position="281"/>
    </location>
</feature>
<feature type="disulfide bond" evidence="1">
    <location>
        <begin position="264"/>
        <end position="285"/>
    </location>
</feature>
<organism>
    <name type="scientific">Arabidopsis thaliana</name>
    <name type="common">Mouse-ear cress</name>
    <dbReference type="NCBI Taxonomy" id="3702"/>
    <lineage>
        <taxon>Eukaryota</taxon>
        <taxon>Viridiplantae</taxon>
        <taxon>Streptophyta</taxon>
        <taxon>Embryophyta</taxon>
        <taxon>Tracheophyta</taxon>
        <taxon>Spermatophyta</taxon>
        <taxon>Magnoliopsida</taxon>
        <taxon>eudicotyledons</taxon>
        <taxon>Gunneridae</taxon>
        <taxon>Pentapetalae</taxon>
        <taxon>rosids</taxon>
        <taxon>malvids</taxon>
        <taxon>Brassicales</taxon>
        <taxon>Brassicaceae</taxon>
        <taxon>Camelineae</taxon>
        <taxon>Arabidopsis</taxon>
    </lineage>
</organism>
<dbReference type="EC" id="1.14.11.2" evidence="8"/>
<dbReference type="EMBL" id="AB026644">
    <property type="protein sequence ID" value="BAB02865.1"/>
    <property type="status" value="ALT_SEQ"/>
    <property type="molecule type" value="Genomic_DNA"/>
</dbReference>
<dbReference type="EMBL" id="CP002686">
    <property type="protein sequence ID" value="AEE77452.1"/>
    <property type="molecule type" value="Genomic_DNA"/>
</dbReference>
<dbReference type="EMBL" id="BT004123">
    <property type="protein sequence ID" value="AAO42145.1"/>
    <property type="molecule type" value="mRNA"/>
</dbReference>
<dbReference type="RefSeq" id="NP_189490.2">
    <property type="nucleotide sequence ID" value="NM_113769.3"/>
</dbReference>
<dbReference type="SMR" id="F4J0A8"/>
<dbReference type="FunCoup" id="F4J0A8">
    <property type="interactions" value="21"/>
</dbReference>
<dbReference type="STRING" id="3702.F4J0A8"/>
<dbReference type="GlyCosmos" id="F4J0A8">
    <property type="glycosylation" value="2 sites, No reported glycans"/>
</dbReference>
<dbReference type="GlyGen" id="F4J0A8">
    <property type="glycosylation" value="2 sites"/>
</dbReference>
<dbReference type="PaxDb" id="3702-AT3G28490.1"/>
<dbReference type="ProteomicsDB" id="248730"/>
<dbReference type="EnsemblPlants" id="AT3G28490.1">
    <property type="protein sequence ID" value="AT3G28490.1"/>
    <property type="gene ID" value="AT3G28490"/>
</dbReference>
<dbReference type="GeneID" id="822479"/>
<dbReference type="Gramene" id="AT3G28490.1">
    <property type="protein sequence ID" value="AT3G28490.1"/>
    <property type="gene ID" value="AT3G28490"/>
</dbReference>
<dbReference type="KEGG" id="ath:AT3G28490"/>
<dbReference type="Araport" id="AT3G28490"/>
<dbReference type="TAIR" id="AT3G28490"/>
<dbReference type="eggNOG" id="KOG1591">
    <property type="taxonomic scope" value="Eukaryota"/>
</dbReference>
<dbReference type="HOGENOM" id="CLU_058132_5_0_1"/>
<dbReference type="InParanoid" id="F4J0A8"/>
<dbReference type="OMA" id="ARCSDDN"/>
<dbReference type="PRO" id="PR:F4J0A8"/>
<dbReference type="Proteomes" id="UP000006548">
    <property type="component" value="Chromosome 3"/>
</dbReference>
<dbReference type="ExpressionAtlas" id="F4J0A8">
    <property type="expression patterns" value="baseline and differential"/>
</dbReference>
<dbReference type="GO" id="GO:0005789">
    <property type="term" value="C:endoplasmic reticulum membrane"/>
    <property type="evidence" value="ECO:0007669"/>
    <property type="project" value="UniProtKB-SubCell"/>
</dbReference>
<dbReference type="GO" id="GO:0005506">
    <property type="term" value="F:iron ion binding"/>
    <property type="evidence" value="ECO:0007669"/>
    <property type="project" value="InterPro"/>
</dbReference>
<dbReference type="GO" id="GO:0031418">
    <property type="term" value="F:L-ascorbic acid binding"/>
    <property type="evidence" value="ECO:0007669"/>
    <property type="project" value="InterPro"/>
</dbReference>
<dbReference type="GO" id="GO:0004656">
    <property type="term" value="F:procollagen-proline 4-dioxygenase activity"/>
    <property type="evidence" value="ECO:0007669"/>
    <property type="project" value="UniProtKB-EC"/>
</dbReference>
<dbReference type="FunFam" id="2.60.120.620:FF:000002">
    <property type="entry name" value="Prolyl 4-hydroxylase 4"/>
    <property type="match status" value="1"/>
</dbReference>
<dbReference type="Gene3D" id="2.60.120.620">
    <property type="entry name" value="q2cbj1_9rhob like domain"/>
    <property type="match status" value="1"/>
</dbReference>
<dbReference type="InterPro" id="IPR005123">
    <property type="entry name" value="Oxoglu/Fe-dep_dioxygenase_dom"/>
</dbReference>
<dbReference type="InterPro" id="IPR045054">
    <property type="entry name" value="P4HA-like"/>
</dbReference>
<dbReference type="InterPro" id="IPR006620">
    <property type="entry name" value="Pro_4_hyd_alph"/>
</dbReference>
<dbReference type="InterPro" id="IPR044862">
    <property type="entry name" value="Pro_4_hyd_alph_FE2OG_OXY"/>
</dbReference>
<dbReference type="InterPro" id="IPR003582">
    <property type="entry name" value="ShKT_dom"/>
</dbReference>
<dbReference type="PANTHER" id="PTHR10869:SF238">
    <property type="entry name" value="PROLYL 4-HYDROXYLASE 6-RELATED"/>
    <property type="match status" value="1"/>
</dbReference>
<dbReference type="PANTHER" id="PTHR10869">
    <property type="entry name" value="PROLYL 4-HYDROXYLASE ALPHA SUBUNIT"/>
    <property type="match status" value="1"/>
</dbReference>
<dbReference type="Pfam" id="PF13640">
    <property type="entry name" value="2OG-FeII_Oxy_3"/>
    <property type="match status" value="1"/>
</dbReference>
<dbReference type="SMART" id="SM00702">
    <property type="entry name" value="P4Hc"/>
    <property type="match status" value="1"/>
</dbReference>
<dbReference type="SMART" id="SM00254">
    <property type="entry name" value="ShKT"/>
    <property type="match status" value="1"/>
</dbReference>
<dbReference type="PROSITE" id="PS51471">
    <property type="entry name" value="FE2OG_OXY"/>
    <property type="match status" value="1"/>
</dbReference>
<evidence type="ECO:0000250" key="1"/>
<evidence type="ECO:0000250" key="2">
    <source>
        <dbReference type="UniProtKB" id="F4JAU3"/>
    </source>
</evidence>
<evidence type="ECO:0000250" key="3">
    <source>
        <dbReference type="UniProtKB" id="Q86KR9"/>
    </source>
</evidence>
<evidence type="ECO:0000255" key="4"/>
<evidence type="ECO:0000255" key="5">
    <source>
        <dbReference type="PROSITE-ProRule" id="PRU00498"/>
    </source>
</evidence>
<evidence type="ECO:0000255" key="6">
    <source>
        <dbReference type="PROSITE-ProRule" id="PRU00805"/>
    </source>
</evidence>
<evidence type="ECO:0000303" key="7">
    <source ref="4"/>
</evidence>
<evidence type="ECO:0000305" key="8"/>